<sequence>MLKYDVIVIGGGHAGVEAAAASARLGVSTLLITLKPDNLGEMSCNPAIGGIAKGTLVKEIDALDGLMGYVIDQAGIHYKMLNETRGPAVWGPRAQADRKLYKKAMYQILTNYPNLDILYGKVEDIEIKSSKVAAIVLNNDSKIPCQKIILTTGTFLSGLIHIGKKKIPAGRVDEEPSYGLSKTLKKVGFKIARLKTGTPPRIDGRTIDYSKTALQPGDKAPRPFSELTNVVNVPQINCFITKTTSETHDIIRENLNKSAMYSGQIEGIGPRYCPSIEDKIVRFSTKSEHRIFLEPEGLDDYTIYPNGISTSLPEDVQHKLIKTIPGLENVKVLRLGYAIEYDYVDPREISVTLETKKIAGLYFAGQINGTTGYEEAAGQGIIAGINAALAVKDQAQFILTRANSYIGVMIDDLTTFGTIEPYRMFTSRSEYRLSLRADNADLRLTELGINIGVISEKRKKIFTKKYEDIEKTKSLLNTLSFTTSKLAKMDIQVAQDGTYKTVLDLFKIPSFNIEQAIKIFPMLKEMQNNNILQLLYIEAKYASYLTRQQADINLFQSEEAQLIPKNIDYFKIPSISLEIQEKLSSHKPTTIGLARRIPGITPAAITSIIIYLKTKYSDGSFT</sequence>
<gene>
    <name evidence="1" type="primary">mnmG</name>
    <name evidence="1" type="synonym">gidA</name>
    <name type="ordered locus">A1C_00455</name>
</gene>
<dbReference type="EMBL" id="CP000847">
    <property type="protein sequence ID" value="ABV74424.1"/>
    <property type="molecule type" value="Genomic_DNA"/>
</dbReference>
<dbReference type="RefSeq" id="WP_012013294.1">
    <property type="nucleotide sequence ID" value="NC_009881.1"/>
</dbReference>
<dbReference type="SMR" id="A8GLZ9"/>
<dbReference type="STRING" id="293614.A1C_00455"/>
<dbReference type="KEGG" id="rak:A1C_00455"/>
<dbReference type="eggNOG" id="COG0445">
    <property type="taxonomic scope" value="Bacteria"/>
</dbReference>
<dbReference type="HOGENOM" id="CLU_007831_2_2_5"/>
<dbReference type="Proteomes" id="UP000006830">
    <property type="component" value="Chromosome"/>
</dbReference>
<dbReference type="GO" id="GO:0005829">
    <property type="term" value="C:cytosol"/>
    <property type="evidence" value="ECO:0007669"/>
    <property type="project" value="TreeGrafter"/>
</dbReference>
<dbReference type="GO" id="GO:0050660">
    <property type="term" value="F:flavin adenine dinucleotide binding"/>
    <property type="evidence" value="ECO:0007669"/>
    <property type="project" value="UniProtKB-UniRule"/>
</dbReference>
<dbReference type="GO" id="GO:0030488">
    <property type="term" value="P:tRNA methylation"/>
    <property type="evidence" value="ECO:0007669"/>
    <property type="project" value="TreeGrafter"/>
</dbReference>
<dbReference type="GO" id="GO:0002098">
    <property type="term" value="P:tRNA wobble uridine modification"/>
    <property type="evidence" value="ECO:0007669"/>
    <property type="project" value="InterPro"/>
</dbReference>
<dbReference type="FunFam" id="3.50.50.60:FF:000082">
    <property type="entry name" value="protein MTO1 homolog, mitochondrial isoform X1"/>
    <property type="match status" value="1"/>
</dbReference>
<dbReference type="FunFam" id="1.10.150.570:FF:000001">
    <property type="entry name" value="tRNA uridine 5-carboxymethylaminomethyl modification enzyme MnmG"/>
    <property type="match status" value="1"/>
</dbReference>
<dbReference type="FunFam" id="3.50.50.60:FF:000002">
    <property type="entry name" value="tRNA uridine 5-carboxymethylaminomethyl modification enzyme MnmG"/>
    <property type="match status" value="1"/>
</dbReference>
<dbReference type="Gene3D" id="3.50.50.60">
    <property type="entry name" value="FAD/NAD(P)-binding domain"/>
    <property type="match status" value="2"/>
</dbReference>
<dbReference type="Gene3D" id="1.10.150.570">
    <property type="entry name" value="GidA associated domain, C-terminal subdomain"/>
    <property type="match status" value="1"/>
</dbReference>
<dbReference type="HAMAP" id="MF_00129">
    <property type="entry name" value="MnmG_GidA"/>
    <property type="match status" value="1"/>
</dbReference>
<dbReference type="InterPro" id="IPR036188">
    <property type="entry name" value="FAD/NAD-bd_sf"/>
</dbReference>
<dbReference type="InterPro" id="IPR049312">
    <property type="entry name" value="GIDA_C_N"/>
</dbReference>
<dbReference type="InterPro" id="IPR004416">
    <property type="entry name" value="MnmG"/>
</dbReference>
<dbReference type="InterPro" id="IPR002218">
    <property type="entry name" value="MnmG-rel"/>
</dbReference>
<dbReference type="InterPro" id="IPR020595">
    <property type="entry name" value="MnmG-rel_CS"/>
</dbReference>
<dbReference type="InterPro" id="IPR026904">
    <property type="entry name" value="MnmG_C"/>
</dbReference>
<dbReference type="InterPro" id="IPR047001">
    <property type="entry name" value="MnmG_C_subdom"/>
</dbReference>
<dbReference type="InterPro" id="IPR044920">
    <property type="entry name" value="MnmG_C_subdom_sf"/>
</dbReference>
<dbReference type="InterPro" id="IPR040131">
    <property type="entry name" value="MnmG_N"/>
</dbReference>
<dbReference type="NCBIfam" id="TIGR00136">
    <property type="entry name" value="mnmG_gidA"/>
    <property type="match status" value="1"/>
</dbReference>
<dbReference type="PANTHER" id="PTHR11806">
    <property type="entry name" value="GLUCOSE INHIBITED DIVISION PROTEIN A"/>
    <property type="match status" value="1"/>
</dbReference>
<dbReference type="PANTHER" id="PTHR11806:SF0">
    <property type="entry name" value="PROTEIN MTO1 HOMOLOG, MITOCHONDRIAL"/>
    <property type="match status" value="1"/>
</dbReference>
<dbReference type="Pfam" id="PF01134">
    <property type="entry name" value="GIDA"/>
    <property type="match status" value="1"/>
</dbReference>
<dbReference type="Pfam" id="PF21680">
    <property type="entry name" value="GIDA_C_1st"/>
    <property type="match status" value="1"/>
</dbReference>
<dbReference type="Pfam" id="PF13932">
    <property type="entry name" value="SAM_GIDA_C"/>
    <property type="match status" value="1"/>
</dbReference>
<dbReference type="PRINTS" id="PR00411">
    <property type="entry name" value="PNDRDTASEI"/>
</dbReference>
<dbReference type="SMART" id="SM01228">
    <property type="entry name" value="GIDA_assoc_3"/>
    <property type="match status" value="1"/>
</dbReference>
<dbReference type="SUPFAM" id="SSF51905">
    <property type="entry name" value="FAD/NAD(P)-binding domain"/>
    <property type="match status" value="1"/>
</dbReference>
<dbReference type="PROSITE" id="PS01280">
    <property type="entry name" value="GIDA_1"/>
    <property type="match status" value="1"/>
</dbReference>
<dbReference type="PROSITE" id="PS01281">
    <property type="entry name" value="GIDA_2"/>
    <property type="match status" value="1"/>
</dbReference>
<evidence type="ECO:0000255" key="1">
    <source>
        <dbReference type="HAMAP-Rule" id="MF_00129"/>
    </source>
</evidence>
<feature type="chain" id="PRO_1000016663" description="tRNA uridine 5-carboxymethylaminomethyl modification enzyme MnmG">
    <location>
        <begin position="1"/>
        <end position="622"/>
    </location>
</feature>
<feature type="binding site" evidence="1">
    <location>
        <begin position="10"/>
        <end position="15"/>
    </location>
    <ligand>
        <name>FAD</name>
        <dbReference type="ChEBI" id="CHEBI:57692"/>
    </ligand>
</feature>
<feature type="binding site" evidence="1">
    <location>
        <position position="122"/>
    </location>
    <ligand>
        <name>FAD</name>
        <dbReference type="ChEBI" id="CHEBI:57692"/>
    </ligand>
</feature>
<feature type="binding site" evidence="1">
    <location>
        <position position="177"/>
    </location>
    <ligand>
        <name>FAD</name>
        <dbReference type="ChEBI" id="CHEBI:57692"/>
    </ligand>
</feature>
<feature type="binding site" evidence="1">
    <location>
        <begin position="269"/>
        <end position="283"/>
    </location>
    <ligand>
        <name>NAD(+)</name>
        <dbReference type="ChEBI" id="CHEBI:57540"/>
    </ligand>
</feature>
<feature type="binding site" evidence="1">
    <location>
        <position position="366"/>
    </location>
    <ligand>
        <name>FAD</name>
        <dbReference type="ChEBI" id="CHEBI:57692"/>
    </ligand>
</feature>
<comment type="function">
    <text evidence="1">NAD-binding protein involved in the addition of a carboxymethylaminomethyl (cmnm) group at the wobble position (U34) of certain tRNAs, forming tRNA-cmnm(5)s(2)U34.</text>
</comment>
<comment type="cofactor">
    <cofactor evidence="1">
        <name>FAD</name>
        <dbReference type="ChEBI" id="CHEBI:57692"/>
    </cofactor>
</comment>
<comment type="subunit">
    <text evidence="1">Homodimer. Heterotetramer of two MnmE and two MnmG subunits.</text>
</comment>
<comment type="subcellular location">
    <subcellularLocation>
        <location evidence="1">Cytoplasm</location>
    </subcellularLocation>
</comment>
<comment type="similarity">
    <text evidence="1">Belongs to the MnmG family.</text>
</comment>
<accession>A8GLZ9</accession>
<reference key="1">
    <citation type="submission" date="2007-09" db="EMBL/GenBank/DDBJ databases">
        <title>Complete genome sequence of Rickettsia akari.</title>
        <authorList>
            <person name="Madan A."/>
            <person name="Fahey J."/>
            <person name="Helton E."/>
            <person name="Ketteman M."/>
            <person name="Madan A."/>
            <person name="Rodrigues S."/>
            <person name="Sanchez A."/>
            <person name="Whiting M."/>
            <person name="Dasch G."/>
            <person name="Eremeeva M."/>
        </authorList>
    </citation>
    <scope>NUCLEOTIDE SEQUENCE [LARGE SCALE GENOMIC DNA]</scope>
    <source>
        <strain>Hartford</strain>
    </source>
</reference>
<organism>
    <name type="scientific">Rickettsia akari (strain Hartford)</name>
    <dbReference type="NCBI Taxonomy" id="293614"/>
    <lineage>
        <taxon>Bacteria</taxon>
        <taxon>Pseudomonadati</taxon>
        <taxon>Pseudomonadota</taxon>
        <taxon>Alphaproteobacteria</taxon>
        <taxon>Rickettsiales</taxon>
        <taxon>Rickettsiaceae</taxon>
        <taxon>Rickettsieae</taxon>
        <taxon>Rickettsia</taxon>
        <taxon>spotted fever group</taxon>
    </lineage>
</organism>
<protein>
    <recommendedName>
        <fullName evidence="1">tRNA uridine 5-carboxymethylaminomethyl modification enzyme MnmG</fullName>
    </recommendedName>
    <alternativeName>
        <fullName evidence="1">Glucose-inhibited division protein A</fullName>
    </alternativeName>
</protein>
<proteinExistence type="inferred from homology"/>
<keyword id="KW-0963">Cytoplasm</keyword>
<keyword id="KW-0274">FAD</keyword>
<keyword id="KW-0285">Flavoprotein</keyword>
<keyword id="KW-0520">NAD</keyword>
<keyword id="KW-0819">tRNA processing</keyword>
<name>MNMG_RICAH</name>